<accession>L7IBL2</accession>
<accession>G4MS33</accession>
<accession>Q5EMU8</accession>
<gene>
    <name type="ORF">OOU_Y34scaffold00406g8</name>
</gene>
<feature type="chain" id="PRO_0000423547" description="Mannitol-1-phosphate 5-dehydrogenase">
    <location>
        <begin position="1"/>
        <end position="400"/>
    </location>
</feature>
<feature type="active site" evidence="1">
    <location>
        <position position="221"/>
    </location>
</feature>
<feature type="binding site" evidence="1">
    <location>
        <begin position="12"/>
        <end position="23"/>
    </location>
    <ligand>
        <name>NAD(+)</name>
        <dbReference type="ChEBI" id="CHEBI:57540"/>
    </ligand>
</feature>
<proteinExistence type="evidence at transcript level"/>
<sequence>MSQTNGTHTKKAVHFGAGNIGRGFVACFLHNSGYEVVFADVTDRTCDALNNQTSYKVIEVGAEGTEEKTITNYRAINSKTKEDELLQEIATADVVTCSVGPNILKFIAPVIAKGLDMRSEELKPAAVIACENAIGATDTLAEHIKEHLPATRVEDLSTRARFANSAIDRIVPAQDPNSGLDVKLEKFYEWVVDRTPFADHEVPSIEGIHWVDNLEPYIERKLYTVNTGHATAAYHGYNRQKRTVYDALQDREIQSEVRRALENTSKLITAKHGINPEEQQAYVRKIMTRIGNPHLEDAVERVGRAPLRKLSRKERFVGPAAELAEKGEDCSALLDAAEMALRFQNVEEDAESKELAKIMAENSAEQVVSQVCGLQPSEKLYPKMVEIVHRVQQDSMDDTE</sequence>
<protein>
    <recommendedName>
        <fullName>Mannitol-1-phosphate 5-dehydrogenase</fullName>
        <shortName>M1PDH</shortName>
        <shortName>MPD</shortName>
        <shortName>MPDH</shortName>
        <ecNumber>1.1.1.17</ecNumber>
    </recommendedName>
</protein>
<organism>
    <name type="scientific">Pyricularia oryzae (strain Y34)</name>
    <name type="common">Rice blast fungus</name>
    <name type="synonym">Magnaporthe oryzae</name>
    <dbReference type="NCBI Taxonomy" id="1143189"/>
    <lineage>
        <taxon>Eukaryota</taxon>
        <taxon>Fungi</taxon>
        <taxon>Dikarya</taxon>
        <taxon>Ascomycota</taxon>
        <taxon>Pezizomycotina</taxon>
        <taxon>Sordariomycetes</taxon>
        <taxon>Sordariomycetidae</taxon>
        <taxon>Magnaporthales</taxon>
        <taxon>Pyriculariaceae</taxon>
        <taxon>Pyricularia</taxon>
    </lineage>
</organism>
<keyword id="KW-0520">NAD</keyword>
<keyword id="KW-0560">Oxidoreductase</keyword>
<dbReference type="EC" id="1.1.1.17"/>
<dbReference type="EMBL" id="AY849685">
    <property type="protein sequence ID" value="AAX07705.1"/>
    <property type="molecule type" value="mRNA"/>
</dbReference>
<dbReference type="EMBL" id="JH793115">
    <property type="protein sequence ID" value="ELQ40653.1"/>
    <property type="molecule type" value="Genomic_DNA"/>
</dbReference>
<dbReference type="SMR" id="L7IBL2"/>
<dbReference type="OrthoDB" id="481278at147550"/>
<dbReference type="Proteomes" id="UP000011086">
    <property type="component" value="Unassembled WGS sequence"/>
</dbReference>
<dbReference type="GO" id="GO:0005829">
    <property type="term" value="C:cytosol"/>
    <property type="evidence" value="ECO:0007669"/>
    <property type="project" value="TreeGrafter"/>
</dbReference>
<dbReference type="GO" id="GO:0008926">
    <property type="term" value="F:mannitol-1-phosphate 5-dehydrogenase activity"/>
    <property type="evidence" value="ECO:0007669"/>
    <property type="project" value="UniProtKB-EC"/>
</dbReference>
<dbReference type="GO" id="GO:0019592">
    <property type="term" value="P:mannitol catabolic process"/>
    <property type="evidence" value="ECO:0007669"/>
    <property type="project" value="TreeGrafter"/>
</dbReference>
<dbReference type="Gene3D" id="1.10.1040.10">
    <property type="entry name" value="N-(1-d-carboxylethyl)-l-norvaline Dehydrogenase, domain 2"/>
    <property type="match status" value="1"/>
</dbReference>
<dbReference type="Gene3D" id="3.40.50.720">
    <property type="entry name" value="NAD(P)-binding Rossmann-like Domain"/>
    <property type="match status" value="1"/>
</dbReference>
<dbReference type="HAMAP" id="MF_00196">
    <property type="entry name" value="Mannitol_dehydrog"/>
    <property type="match status" value="1"/>
</dbReference>
<dbReference type="InterPro" id="IPR008927">
    <property type="entry name" value="6-PGluconate_DH-like_C_sf"/>
</dbReference>
<dbReference type="InterPro" id="IPR013328">
    <property type="entry name" value="6PGD_dom2"/>
</dbReference>
<dbReference type="InterPro" id="IPR023028">
    <property type="entry name" value="Mannitol_1_phos_5_DH"/>
</dbReference>
<dbReference type="InterPro" id="IPR000669">
    <property type="entry name" value="Mannitol_DH"/>
</dbReference>
<dbReference type="InterPro" id="IPR013118">
    <property type="entry name" value="Mannitol_DH_C"/>
</dbReference>
<dbReference type="InterPro" id="IPR013131">
    <property type="entry name" value="Mannitol_DH_N"/>
</dbReference>
<dbReference type="InterPro" id="IPR036291">
    <property type="entry name" value="NAD(P)-bd_dom_sf"/>
</dbReference>
<dbReference type="NCBIfam" id="NF002652">
    <property type="entry name" value="PRK02318.2-5"/>
    <property type="match status" value="1"/>
</dbReference>
<dbReference type="PANTHER" id="PTHR30524:SF0">
    <property type="entry name" value="ALTRONATE OXIDOREDUCTASE-RELATED"/>
    <property type="match status" value="1"/>
</dbReference>
<dbReference type="PANTHER" id="PTHR30524">
    <property type="entry name" value="MANNITOL-1-PHOSPHATE 5-DEHYDROGENASE"/>
    <property type="match status" value="1"/>
</dbReference>
<dbReference type="Pfam" id="PF01232">
    <property type="entry name" value="Mannitol_dh"/>
    <property type="match status" value="1"/>
</dbReference>
<dbReference type="Pfam" id="PF08125">
    <property type="entry name" value="Mannitol_dh_C"/>
    <property type="match status" value="1"/>
</dbReference>
<dbReference type="PRINTS" id="PR00084">
    <property type="entry name" value="MTLDHDRGNASE"/>
</dbReference>
<dbReference type="SUPFAM" id="SSF48179">
    <property type="entry name" value="6-phosphogluconate dehydrogenase C-terminal domain-like"/>
    <property type="match status" value="1"/>
</dbReference>
<dbReference type="SUPFAM" id="SSF51735">
    <property type="entry name" value="NAD(P)-binding Rossmann-fold domains"/>
    <property type="match status" value="1"/>
</dbReference>
<evidence type="ECO:0000250" key="1"/>
<evidence type="ECO:0000305" key="2"/>
<comment type="function">
    <text evidence="1">Catalyzes the NAD(H)-dependent interconversion of D-fructose 6-phosphate and D-mannitol 1-phosphate in the mannitol metabolic pathway.</text>
</comment>
<comment type="catalytic activity">
    <reaction>
        <text>D-mannitol 1-phosphate + NAD(+) = beta-D-fructose 6-phosphate + NADH + H(+)</text>
        <dbReference type="Rhea" id="RHEA:19661"/>
        <dbReference type="ChEBI" id="CHEBI:15378"/>
        <dbReference type="ChEBI" id="CHEBI:57540"/>
        <dbReference type="ChEBI" id="CHEBI:57634"/>
        <dbReference type="ChEBI" id="CHEBI:57945"/>
        <dbReference type="ChEBI" id="CHEBI:61381"/>
        <dbReference type="EC" id="1.1.1.17"/>
    </reaction>
</comment>
<comment type="subunit">
    <text evidence="1">Monomer.</text>
</comment>
<comment type="similarity">
    <text evidence="2">Belongs to the mannitol dehydrogenase family.</text>
</comment>
<name>MTLD_PYRO3</name>
<reference key="1">
    <citation type="submission" date="2004-12" db="EMBL/GenBank/DDBJ databases">
        <authorList>
            <person name="Dong H.-T."/>
            <person name="Peng Y.-L."/>
            <person name="Chen B.-S."/>
            <person name="Li Y.-Z."/>
            <person name="Li D.-B."/>
        </authorList>
    </citation>
    <scope>NUCLEOTIDE SEQUENCE [MRNA]</scope>
    <source>
        <strain>Y34</strain>
    </source>
</reference>
<reference key="2">
    <citation type="journal article" date="2012" name="PLoS Genet.">
        <title>Comparative analysis of the genomes of two field isolates of the rice blast fungus Magnaporthe oryzae.</title>
        <authorList>
            <person name="Xue M."/>
            <person name="Yang J."/>
            <person name="Li Z."/>
            <person name="Hu S."/>
            <person name="Yao N."/>
            <person name="Dean R.A."/>
            <person name="Zhao W."/>
            <person name="Shen M."/>
            <person name="Zhang H."/>
            <person name="Li C."/>
            <person name="Liu L."/>
            <person name="Cao L."/>
            <person name="Xu X."/>
            <person name="Xing Y."/>
            <person name="Hsiang T."/>
            <person name="Zhang Z."/>
            <person name="Xu J.-R."/>
            <person name="Peng Y.-L."/>
        </authorList>
    </citation>
    <scope>NUCLEOTIDE SEQUENCE [LARGE SCALE GENOMIC DNA]</scope>
    <source>
        <strain>Y34</strain>
    </source>
</reference>